<gene>
    <name type="primary">Nelf-A</name>
    <name type="ORF">CG5874</name>
</gene>
<reference key="1">
    <citation type="journal article" date="2000" name="Science">
        <title>The genome sequence of Drosophila melanogaster.</title>
        <authorList>
            <person name="Adams M.D."/>
            <person name="Celniker S.E."/>
            <person name="Holt R.A."/>
            <person name="Evans C.A."/>
            <person name="Gocayne J.D."/>
            <person name="Amanatides P.G."/>
            <person name="Scherer S.E."/>
            <person name="Li P.W."/>
            <person name="Hoskins R.A."/>
            <person name="Galle R.F."/>
            <person name="George R.A."/>
            <person name="Lewis S.E."/>
            <person name="Richards S."/>
            <person name="Ashburner M."/>
            <person name="Henderson S.N."/>
            <person name="Sutton G.G."/>
            <person name="Wortman J.R."/>
            <person name="Yandell M.D."/>
            <person name="Zhang Q."/>
            <person name="Chen L.X."/>
            <person name="Brandon R.C."/>
            <person name="Rogers Y.-H.C."/>
            <person name="Blazej R.G."/>
            <person name="Champe M."/>
            <person name="Pfeiffer B.D."/>
            <person name="Wan K.H."/>
            <person name="Doyle C."/>
            <person name="Baxter E.G."/>
            <person name="Helt G."/>
            <person name="Nelson C.R."/>
            <person name="Miklos G.L.G."/>
            <person name="Abril J.F."/>
            <person name="Agbayani A."/>
            <person name="An H.-J."/>
            <person name="Andrews-Pfannkoch C."/>
            <person name="Baldwin D."/>
            <person name="Ballew R.M."/>
            <person name="Basu A."/>
            <person name="Baxendale J."/>
            <person name="Bayraktaroglu L."/>
            <person name="Beasley E.M."/>
            <person name="Beeson K.Y."/>
            <person name="Benos P.V."/>
            <person name="Berman B.P."/>
            <person name="Bhandari D."/>
            <person name="Bolshakov S."/>
            <person name="Borkova D."/>
            <person name="Botchan M.R."/>
            <person name="Bouck J."/>
            <person name="Brokstein P."/>
            <person name="Brottier P."/>
            <person name="Burtis K.C."/>
            <person name="Busam D.A."/>
            <person name="Butler H."/>
            <person name="Cadieu E."/>
            <person name="Center A."/>
            <person name="Chandra I."/>
            <person name="Cherry J.M."/>
            <person name="Cawley S."/>
            <person name="Dahlke C."/>
            <person name="Davenport L.B."/>
            <person name="Davies P."/>
            <person name="de Pablos B."/>
            <person name="Delcher A."/>
            <person name="Deng Z."/>
            <person name="Mays A.D."/>
            <person name="Dew I."/>
            <person name="Dietz S.M."/>
            <person name="Dodson K."/>
            <person name="Doup L.E."/>
            <person name="Downes M."/>
            <person name="Dugan-Rocha S."/>
            <person name="Dunkov B.C."/>
            <person name="Dunn P."/>
            <person name="Durbin K.J."/>
            <person name="Evangelista C.C."/>
            <person name="Ferraz C."/>
            <person name="Ferriera S."/>
            <person name="Fleischmann W."/>
            <person name="Fosler C."/>
            <person name="Gabrielian A.E."/>
            <person name="Garg N.S."/>
            <person name="Gelbart W.M."/>
            <person name="Glasser K."/>
            <person name="Glodek A."/>
            <person name="Gong F."/>
            <person name="Gorrell J.H."/>
            <person name="Gu Z."/>
            <person name="Guan P."/>
            <person name="Harris M."/>
            <person name="Harris N.L."/>
            <person name="Harvey D.A."/>
            <person name="Heiman T.J."/>
            <person name="Hernandez J.R."/>
            <person name="Houck J."/>
            <person name="Hostin D."/>
            <person name="Houston K.A."/>
            <person name="Howland T.J."/>
            <person name="Wei M.-H."/>
            <person name="Ibegwam C."/>
            <person name="Jalali M."/>
            <person name="Kalush F."/>
            <person name="Karpen G.H."/>
            <person name="Ke Z."/>
            <person name="Kennison J.A."/>
            <person name="Ketchum K.A."/>
            <person name="Kimmel B.E."/>
            <person name="Kodira C.D."/>
            <person name="Kraft C.L."/>
            <person name="Kravitz S."/>
            <person name="Kulp D."/>
            <person name="Lai Z."/>
            <person name="Lasko P."/>
            <person name="Lei Y."/>
            <person name="Levitsky A.A."/>
            <person name="Li J.H."/>
            <person name="Li Z."/>
            <person name="Liang Y."/>
            <person name="Lin X."/>
            <person name="Liu X."/>
            <person name="Mattei B."/>
            <person name="McIntosh T.C."/>
            <person name="McLeod M.P."/>
            <person name="McPherson D."/>
            <person name="Merkulov G."/>
            <person name="Milshina N.V."/>
            <person name="Mobarry C."/>
            <person name="Morris J."/>
            <person name="Moshrefi A."/>
            <person name="Mount S.M."/>
            <person name="Moy M."/>
            <person name="Murphy B."/>
            <person name="Murphy L."/>
            <person name="Muzny D.M."/>
            <person name="Nelson D.L."/>
            <person name="Nelson D.R."/>
            <person name="Nelson K.A."/>
            <person name="Nixon K."/>
            <person name="Nusskern D.R."/>
            <person name="Pacleb J.M."/>
            <person name="Palazzolo M."/>
            <person name="Pittman G.S."/>
            <person name="Pan S."/>
            <person name="Pollard J."/>
            <person name="Puri V."/>
            <person name="Reese M.G."/>
            <person name="Reinert K."/>
            <person name="Remington K."/>
            <person name="Saunders R.D.C."/>
            <person name="Scheeler F."/>
            <person name="Shen H."/>
            <person name="Shue B.C."/>
            <person name="Siden-Kiamos I."/>
            <person name="Simpson M."/>
            <person name="Skupski M.P."/>
            <person name="Smith T.J."/>
            <person name="Spier E."/>
            <person name="Spradling A.C."/>
            <person name="Stapleton M."/>
            <person name="Strong R."/>
            <person name="Sun E."/>
            <person name="Svirskas R."/>
            <person name="Tector C."/>
            <person name="Turner R."/>
            <person name="Venter E."/>
            <person name="Wang A.H."/>
            <person name="Wang X."/>
            <person name="Wang Z.-Y."/>
            <person name="Wassarman D.A."/>
            <person name="Weinstock G.M."/>
            <person name="Weissenbach J."/>
            <person name="Williams S.M."/>
            <person name="Woodage T."/>
            <person name="Worley K.C."/>
            <person name="Wu D."/>
            <person name="Yang S."/>
            <person name="Yao Q.A."/>
            <person name="Ye J."/>
            <person name="Yeh R.-F."/>
            <person name="Zaveri J.S."/>
            <person name="Zhan M."/>
            <person name="Zhang G."/>
            <person name="Zhao Q."/>
            <person name="Zheng L."/>
            <person name="Zheng X.H."/>
            <person name="Zhong F.N."/>
            <person name="Zhong W."/>
            <person name="Zhou X."/>
            <person name="Zhu S.C."/>
            <person name="Zhu X."/>
            <person name="Smith H.O."/>
            <person name="Gibbs R.A."/>
            <person name="Myers E.W."/>
            <person name="Rubin G.M."/>
            <person name="Venter J.C."/>
        </authorList>
    </citation>
    <scope>NUCLEOTIDE SEQUENCE [LARGE SCALE GENOMIC DNA]</scope>
    <source>
        <strain>Berkeley</strain>
    </source>
</reference>
<reference key="2">
    <citation type="journal article" date="2002" name="Genome Biol.">
        <title>Annotation of the Drosophila melanogaster euchromatic genome: a systematic review.</title>
        <authorList>
            <person name="Misra S."/>
            <person name="Crosby M.A."/>
            <person name="Mungall C.J."/>
            <person name="Matthews B.B."/>
            <person name="Campbell K.S."/>
            <person name="Hradecky P."/>
            <person name="Huang Y."/>
            <person name="Kaminker J.S."/>
            <person name="Millburn G.H."/>
            <person name="Prochnik S.E."/>
            <person name="Smith C.D."/>
            <person name="Tupy J.L."/>
            <person name="Whitfield E.J."/>
            <person name="Bayraktaroglu L."/>
            <person name="Berman B.P."/>
            <person name="Bettencourt B.R."/>
            <person name="Celniker S.E."/>
            <person name="de Grey A.D.N.J."/>
            <person name="Drysdale R.A."/>
            <person name="Harris N.L."/>
            <person name="Richter J."/>
            <person name="Russo S."/>
            <person name="Schroeder A.J."/>
            <person name="Shu S.Q."/>
            <person name="Stapleton M."/>
            <person name="Yamada C."/>
            <person name="Ashburner M."/>
            <person name="Gelbart W.M."/>
            <person name="Rubin G.M."/>
            <person name="Lewis S.E."/>
        </authorList>
    </citation>
    <scope>GENOME REANNOTATION</scope>
    <source>
        <strain>Berkeley</strain>
    </source>
</reference>
<reference key="3">
    <citation type="journal article" date="2002" name="Genome Biol.">
        <title>A Drosophila full-length cDNA resource.</title>
        <authorList>
            <person name="Stapleton M."/>
            <person name="Carlson J.W."/>
            <person name="Brokstein P."/>
            <person name="Yu C."/>
            <person name="Champe M."/>
            <person name="George R.A."/>
            <person name="Guarin H."/>
            <person name="Kronmiller B."/>
            <person name="Pacleb J.M."/>
            <person name="Park S."/>
            <person name="Wan K.H."/>
            <person name="Rubin G.M."/>
            <person name="Celniker S.E."/>
        </authorList>
    </citation>
    <scope>NUCLEOTIDE SEQUENCE [LARGE SCALE MRNA]</scope>
    <source>
        <strain>Berkeley</strain>
        <tissue>Embryo</tissue>
    </source>
</reference>
<reference key="4">
    <citation type="journal article" date="2005" name="Nucleic Acids Res.">
        <title>Molecular characterization of Drosophila NELF.</title>
        <authorList>
            <person name="Wu C.-H."/>
            <person name="Lee C."/>
            <person name="Fan R."/>
            <person name="Smith M.J."/>
            <person name="Yamaguchi Y."/>
            <person name="Handa H."/>
            <person name="Gilmour D.S."/>
        </authorList>
    </citation>
    <scope>FUNCTION</scope>
    <scope>SUBUNIT</scope>
    <scope>SUBCELLULAR LOCATION</scope>
</reference>
<reference key="5">
    <citation type="journal article" date="2010" name="PLoS ONE">
        <title>NELF potentiates gene transcription in the Drosophila embryo.</title>
        <authorList>
            <person name="Wang X."/>
            <person name="Hang S."/>
            <person name="Prazak L."/>
            <person name="Gergen J.P."/>
        </authorList>
    </citation>
    <scope>FUNCTION</scope>
    <scope>DEVELOPMENTAL STAGE</scope>
    <scope>DISRUPTION PHENOTYPE</scope>
</reference>
<reference key="6">
    <citation type="journal article" date="2017" name="PLoS ONE">
        <title>The Drosophila CLAMP protein associates with diverse proteins on chromatin.</title>
        <authorList>
            <person name="Urban J.A."/>
            <person name="Urban J.M."/>
            <person name="Kuzu G."/>
            <person name="Larschan E.N."/>
        </authorList>
    </citation>
    <scope>INTERACTION WITH CLAMP</scope>
</reference>
<organism>
    <name type="scientific">Drosophila melanogaster</name>
    <name type="common">Fruit fly</name>
    <dbReference type="NCBI Taxonomy" id="7227"/>
    <lineage>
        <taxon>Eukaryota</taxon>
        <taxon>Metazoa</taxon>
        <taxon>Ecdysozoa</taxon>
        <taxon>Arthropoda</taxon>
        <taxon>Hexapoda</taxon>
        <taxon>Insecta</taxon>
        <taxon>Pterygota</taxon>
        <taxon>Neoptera</taxon>
        <taxon>Endopterygota</taxon>
        <taxon>Diptera</taxon>
        <taxon>Brachycera</taxon>
        <taxon>Muscomorpha</taxon>
        <taxon>Ephydroidea</taxon>
        <taxon>Drosophilidae</taxon>
        <taxon>Drosophila</taxon>
        <taxon>Sophophora</taxon>
    </lineage>
</organism>
<dbReference type="EMBL" id="AE014297">
    <property type="protein sequence ID" value="AAF55869.3"/>
    <property type="molecule type" value="Genomic_DNA"/>
</dbReference>
<dbReference type="EMBL" id="BT004470">
    <property type="protein sequence ID" value="AAO42634.1"/>
    <property type="molecule type" value="mRNA"/>
</dbReference>
<dbReference type="RefSeq" id="NP_650958.2">
    <property type="nucleotide sequence ID" value="NM_142701.2"/>
</dbReference>
<dbReference type="SMR" id="Q86NP2"/>
<dbReference type="BioGRID" id="67490">
    <property type="interactions" value="9"/>
</dbReference>
<dbReference type="ComplexPortal" id="CPX-2430">
    <property type="entry name" value="NELF negative elongation factor complex"/>
</dbReference>
<dbReference type="FunCoup" id="Q86NP2">
    <property type="interactions" value="1825"/>
</dbReference>
<dbReference type="IntAct" id="Q86NP2">
    <property type="interactions" value="3"/>
</dbReference>
<dbReference type="STRING" id="7227.FBpp0303402"/>
<dbReference type="GlyGen" id="Q86NP2">
    <property type="glycosylation" value="3 sites, 1 O-linked glycan (1 site)"/>
</dbReference>
<dbReference type="PaxDb" id="7227-FBpp0083453"/>
<dbReference type="EnsemblMetazoa" id="FBtr0084051">
    <property type="protein sequence ID" value="FBpp0083453"/>
    <property type="gene ID" value="FBgn0038872"/>
</dbReference>
<dbReference type="GeneID" id="42520"/>
<dbReference type="KEGG" id="dme:Dmel_CG5874"/>
<dbReference type="UCSC" id="CG5874-RA">
    <property type="organism name" value="d. melanogaster"/>
</dbReference>
<dbReference type="AGR" id="FB:FBgn0038872"/>
<dbReference type="CTD" id="42520"/>
<dbReference type="FlyBase" id="FBgn0038872">
    <property type="gene designation" value="Nelf-A"/>
</dbReference>
<dbReference type="VEuPathDB" id="VectorBase:FBgn0038872"/>
<dbReference type="eggNOG" id="ENOG502QTCD">
    <property type="taxonomic scope" value="Eukaryota"/>
</dbReference>
<dbReference type="GeneTree" id="ENSGT00390000005342"/>
<dbReference type="InParanoid" id="Q86NP2"/>
<dbReference type="OMA" id="YILAAPQ"/>
<dbReference type="OrthoDB" id="2135488at2759"/>
<dbReference type="PhylomeDB" id="Q86NP2"/>
<dbReference type="Reactome" id="R-DME-112382">
    <property type="pathway name" value="Formation of RNA Pol II elongation complex"/>
</dbReference>
<dbReference type="Reactome" id="R-DME-113418">
    <property type="pathway name" value="Formation of the Early Elongation Complex"/>
</dbReference>
<dbReference type="Reactome" id="R-DME-674695">
    <property type="pathway name" value="RNA Polymerase II Pre-transcription Events"/>
</dbReference>
<dbReference type="Reactome" id="R-DME-6796648">
    <property type="pathway name" value="TP53 Regulates Transcription of DNA Repair Genes"/>
</dbReference>
<dbReference type="Reactome" id="R-DME-75955">
    <property type="pathway name" value="RNA Polymerase II Transcription Elongation"/>
</dbReference>
<dbReference type="BioGRID-ORCS" id="42520">
    <property type="hits" value="1 hit in 1 CRISPR screen"/>
</dbReference>
<dbReference type="ChiTaRS" id="Nelf-A">
    <property type="organism name" value="fly"/>
</dbReference>
<dbReference type="GenomeRNAi" id="42520"/>
<dbReference type="PRO" id="PR:Q86NP2"/>
<dbReference type="Proteomes" id="UP000000803">
    <property type="component" value="Chromosome 3R"/>
</dbReference>
<dbReference type="Bgee" id="FBgn0038872">
    <property type="expression patterns" value="Expressed in lamina monopolar neuron L3 (Drosophila) in insect head and 164 other cell types or tissues"/>
</dbReference>
<dbReference type="ExpressionAtlas" id="Q86NP2">
    <property type="expression patterns" value="baseline and differential"/>
</dbReference>
<dbReference type="GO" id="GO:0005694">
    <property type="term" value="C:chromosome"/>
    <property type="evidence" value="ECO:0007669"/>
    <property type="project" value="UniProtKB-SubCell"/>
</dbReference>
<dbReference type="GO" id="GO:0032021">
    <property type="term" value="C:NELF complex"/>
    <property type="evidence" value="ECO:0000353"/>
    <property type="project" value="FlyBase"/>
</dbReference>
<dbReference type="GO" id="GO:0005634">
    <property type="term" value="C:nucleus"/>
    <property type="evidence" value="ECO:0000314"/>
    <property type="project" value="FlyBase"/>
</dbReference>
<dbReference type="GO" id="GO:0017053">
    <property type="term" value="C:transcription repressor complex"/>
    <property type="evidence" value="ECO:0000250"/>
    <property type="project" value="UniProtKB"/>
</dbReference>
<dbReference type="GO" id="GO:0003723">
    <property type="term" value="F:RNA binding"/>
    <property type="evidence" value="ECO:0000250"/>
    <property type="project" value="UniProtKB"/>
</dbReference>
<dbReference type="GO" id="GO:0000122">
    <property type="term" value="P:negative regulation of transcription by RNA polymerase II"/>
    <property type="evidence" value="ECO:0000250"/>
    <property type="project" value="UniProtKB"/>
</dbReference>
<dbReference type="GO" id="GO:0034244">
    <property type="term" value="P:negative regulation of transcription elongation by RNA polymerase II"/>
    <property type="evidence" value="ECO:0000314"/>
    <property type="project" value="FlyBase"/>
</dbReference>
<dbReference type="InterPro" id="IPR037517">
    <property type="entry name" value="HDAG_dom"/>
</dbReference>
<dbReference type="InterPro" id="IPR052828">
    <property type="entry name" value="NELF-A_domain"/>
</dbReference>
<dbReference type="InterPro" id="IPR056557">
    <property type="entry name" value="NELF-A_N"/>
</dbReference>
<dbReference type="PANTHER" id="PTHR13328:SF4">
    <property type="entry name" value="NEGATIVE ELONGATION FACTOR A"/>
    <property type="match status" value="1"/>
</dbReference>
<dbReference type="PANTHER" id="PTHR13328">
    <property type="entry name" value="NEGATIVE ELONGATION FACTOR A NELF-A"/>
    <property type="match status" value="1"/>
</dbReference>
<dbReference type="Pfam" id="PF23553">
    <property type="entry name" value="NELF-A_N"/>
    <property type="match status" value="1"/>
</dbReference>
<dbReference type="PROSITE" id="PS51838">
    <property type="entry name" value="HDAG"/>
    <property type="match status" value="1"/>
</dbReference>
<evidence type="ECO:0000255" key="1">
    <source>
        <dbReference type="PROSITE-ProRule" id="PRU01183"/>
    </source>
</evidence>
<evidence type="ECO:0000256" key="2">
    <source>
        <dbReference type="SAM" id="MobiDB-lite"/>
    </source>
</evidence>
<evidence type="ECO:0000269" key="3">
    <source>
    </source>
</evidence>
<evidence type="ECO:0000269" key="4">
    <source>
    </source>
</evidence>
<evidence type="ECO:0000269" key="5">
    <source>
    </source>
</evidence>
<evidence type="ECO:0000305" key="6"/>
<sequence>MANVRDSDTSLWLHNKLGTSNDSWINGSICSQLNKEVLRNIKECFPDLQTQVKLKLLLSFLHIPRRLVEEWKAELEEVIEVAGLDSELWVSMLAETMKTFPATSSLNTEISDYEDTRPIFIDMVNDLRKLVTKHSDLGMLPLECQYLNKNALISVVGQQPAPVKHFTLKRKPKSAQLRTELLHKSADAQSSLKKASAPTIPLRSRGMPRKMTDTTPLKGIPSRMPTTGFRSATVPGNAAQRPNLSRTPAGRKDGGIKLIEFTEQPLGYAAAKKRKREQQLEEQQKKQEQKQQQAAAAAAAAATAAASNAGDSSPTDAATASGGETPVTPTSANNSFEIKMEPQQLNQSAGSLEEPQDDEMSGKANMECDIETPEYATATLDFAQATSTSVADGQPGKPAVETKLKTPRTPKSAAKLNNNNNNNNNNSFNHTPKRIKQEIEIKSEEIIVPASIKLEKIETSPSTQRVSIQQQPPSLVQRTPHLLIRSSPQKRQNNGATTSAGTTTTTVGNTTIKMEKLDIKPMIRATGVSPSTSAGTTTTLLTPQQLRQAANPLANLPNNISVKITSAKAKAAAAAAATSSGSQTQSQQPQTLQVQQAPQQSHPPLLINSSTPVILASSPSAQRAKALALPSSSTSATTTTTIPSQAIKTMPLSQLKTATNSGPVIISQTIIQPAKRAQQQAGTSSAAAASQQQQQQQSQQQLLHQQIQQQTQQQAQLPQQPQQQQTQYILATPQQQPQQIQQQQQQQQPILPTLTSFSHSRPMPQTTTLYQATTPSGSGQTPTKILLKTSGSSSVVMTPLRQAQPQQATAVVSSNPPPLVATSAAVVSPGQTTLNIQNVQLPNRPVTIQPASQAAQQQHMQAQLQQQQPHPQHTIVANTTATQQPKLSQVLMQPTAAVGTSGVSALNVSPTSGKNKTIILTQKGVILRNIGGDMYQQIPISNVGNMQGLGGTTLMTTTAGPPSLVKTTPSSGVQLQQQQSGKQILPTLIPTSSLGGQHVIVQQQQPTNVIGNSQQQTIIRPVMTNVGGGLTTLPQGLTLIQRPGQQPQLVQVQAAPGSTQRTIITQSNTAAAASQQQPRQQQQQILVQHKPAPTLQQRLVTSTTSGGQGQQGNPNAGLPRTVQVQVQAQQQQQPQQQQATQQQSQQAPQRRGLSLSNEHVHKAHEMFRKANRVSRPDKALILGFMAGLRENPRPNNENVLVIKLGETEEKVQQDNGHTALCLVESHIRLDYNTGEWKTFQNYRLQDQSAAS</sequence>
<keyword id="KW-0158">Chromosome</keyword>
<keyword id="KW-0217">Developmental protein</keyword>
<keyword id="KW-0539">Nucleus</keyword>
<keyword id="KW-1185">Reference proteome</keyword>
<keyword id="KW-0678">Repressor</keyword>
<keyword id="KW-0804">Transcription</keyword>
<keyword id="KW-0805">Transcription regulation</keyword>
<name>NELFA_DROME</name>
<accession>Q86NP2</accession>
<accession>Q9VDC7</accession>
<comment type="function">
    <text evidence="3 4">Essential component of the NELF complex, a complex that negatively regulates the elongation of transcription by RNA polymerase II. Has an essential role in postembryonic development.</text>
</comment>
<comment type="subunit">
    <text evidence="3 5">Component of the NELF complex (PubMed:15741180). Interacts with Clamp (PubMed:29281702).</text>
</comment>
<comment type="subcellular location">
    <subcellularLocation>
        <location evidence="3">Nucleus</location>
    </subcellularLocation>
    <subcellularLocation>
        <location evidence="3">Chromosome</location>
    </subcellularLocation>
    <text>Associates with polytene chromosomes. Associates with the hsp70 promoter when it is inactive, but not when it is activated.</text>
</comment>
<comment type="developmental stage">
    <text evidence="4">Expressed both maternally and zygotically.</text>
</comment>
<comment type="disruption phenotype">
    <text evidence="4">Loss of zygotic expression results in morphologically normal embryos that hatch as 1st instar larvae. These larvae survive for several days but do not increase in size. Loss of maternal expression causes arrest prior to the cellular blastoderm stage and embryos display abnormal nuclear morphology. Those that escape this early arrest proceed through the blastoderm stage and gastrulate normally, but then almost always arrest during germband retraction with head defects and incomplete dorsal closure.</text>
</comment>
<comment type="similarity">
    <text evidence="6">Belongs to the NELF-A family.</text>
</comment>
<feature type="chain" id="PRO_0000219128" description="Negative elongation factor A">
    <location>
        <begin position="1"/>
        <end position="1251"/>
    </location>
</feature>
<feature type="domain" description="HDAg" evidence="1">
    <location>
        <begin position="89"/>
        <end position="254"/>
    </location>
</feature>
<feature type="region of interest" description="NELF-C/D-binding" evidence="1">
    <location>
        <begin position="128"/>
        <end position="191"/>
    </location>
</feature>
<feature type="region of interest" description="Disordered" evidence="2">
    <location>
        <begin position="185"/>
        <end position="256"/>
    </location>
</feature>
<feature type="region of interest" description="RNAPII-binding" evidence="1">
    <location>
        <begin position="192"/>
        <end position="254"/>
    </location>
</feature>
<feature type="region of interest" description="Disordered" evidence="2">
    <location>
        <begin position="269"/>
        <end position="333"/>
    </location>
</feature>
<feature type="region of interest" description="Disordered" evidence="2">
    <location>
        <begin position="343"/>
        <end position="362"/>
    </location>
</feature>
<feature type="region of interest" description="Disordered" evidence="2">
    <location>
        <begin position="387"/>
        <end position="430"/>
    </location>
</feature>
<feature type="region of interest" description="Disordered" evidence="2">
    <location>
        <begin position="484"/>
        <end position="509"/>
    </location>
</feature>
<feature type="region of interest" description="Disordered" evidence="2">
    <location>
        <begin position="578"/>
        <end position="607"/>
    </location>
</feature>
<feature type="region of interest" description="Disordered" evidence="2">
    <location>
        <begin position="852"/>
        <end position="872"/>
    </location>
</feature>
<feature type="region of interest" description="Disordered" evidence="2">
    <location>
        <begin position="1099"/>
        <end position="1154"/>
    </location>
</feature>
<feature type="compositionally biased region" description="Basic and acidic residues" evidence="2">
    <location>
        <begin position="277"/>
        <end position="289"/>
    </location>
</feature>
<feature type="compositionally biased region" description="Low complexity" evidence="2">
    <location>
        <begin position="290"/>
        <end position="306"/>
    </location>
</feature>
<feature type="compositionally biased region" description="Polar residues" evidence="2">
    <location>
        <begin position="309"/>
        <end position="318"/>
    </location>
</feature>
<feature type="compositionally biased region" description="Low complexity" evidence="2">
    <location>
        <begin position="417"/>
        <end position="426"/>
    </location>
</feature>
<feature type="compositionally biased region" description="Low complexity" evidence="2">
    <location>
        <begin position="493"/>
        <end position="509"/>
    </location>
</feature>
<feature type="compositionally biased region" description="Low complexity" evidence="2">
    <location>
        <begin position="578"/>
        <end position="600"/>
    </location>
</feature>
<feature type="compositionally biased region" description="Low complexity" evidence="2">
    <location>
        <begin position="1119"/>
        <end position="1151"/>
    </location>
</feature>
<feature type="sequence conflict" description="In Ref. 3; AAO42634." evidence="6" ref="3">
    <original>V</original>
    <variation>A</variation>
    <location>
        <position position="390"/>
    </location>
</feature>
<feature type="sequence conflict" description="In Ref. 3; AAO42634." evidence="6" ref="3">
    <location>
        <begin position="422"/>
        <end position="424"/>
    </location>
</feature>
<feature type="sequence conflict" description="In Ref. 3; AAO42634." evidence="6" ref="3">
    <original>S</original>
    <variation>I</variation>
    <location>
        <position position="467"/>
    </location>
</feature>
<feature type="sequence conflict" description="In Ref. 3; AAO42634." evidence="6" ref="3">
    <original>A</original>
    <variation>V</variation>
    <location>
        <position position="534"/>
    </location>
</feature>
<protein>
    <recommendedName>
        <fullName>Negative elongation factor A</fullName>
    </recommendedName>
</protein>
<proteinExistence type="evidence at protein level"/>